<proteinExistence type="inferred from homology"/>
<feature type="chain" id="PRO_1000060763" description="Large ribosomal subunit protein bL34">
    <location>
        <begin position="1"/>
        <end position="50"/>
    </location>
</feature>
<feature type="region of interest" description="Disordered" evidence="2">
    <location>
        <begin position="1"/>
        <end position="32"/>
    </location>
</feature>
<feature type="compositionally biased region" description="Basic residues" evidence="2">
    <location>
        <begin position="10"/>
        <end position="20"/>
    </location>
</feature>
<evidence type="ECO:0000255" key="1">
    <source>
        <dbReference type="HAMAP-Rule" id="MF_00391"/>
    </source>
</evidence>
<evidence type="ECO:0000256" key="2">
    <source>
        <dbReference type="SAM" id="MobiDB-lite"/>
    </source>
</evidence>
<evidence type="ECO:0000305" key="3"/>
<accession>Q39ZS6</accession>
<gene>
    <name evidence="1" type="primary">rpmH</name>
    <name type="ordered locus">Pcar_3146</name>
</gene>
<organism>
    <name type="scientific">Syntrophotalea carbinolica (strain DSM 2380 / NBRC 103641 / GraBd1)</name>
    <name type="common">Pelobacter carbinolicus</name>
    <dbReference type="NCBI Taxonomy" id="338963"/>
    <lineage>
        <taxon>Bacteria</taxon>
        <taxon>Pseudomonadati</taxon>
        <taxon>Thermodesulfobacteriota</taxon>
        <taxon>Desulfuromonadia</taxon>
        <taxon>Desulfuromonadales</taxon>
        <taxon>Syntrophotaleaceae</taxon>
        <taxon>Syntrophotalea</taxon>
    </lineage>
</organism>
<dbReference type="EMBL" id="CP000142">
    <property type="protein sequence ID" value="ABA90381.1"/>
    <property type="molecule type" value="Genomic_DNA"/>
</dbReference>
<dbReference type="RefSeq" id="WP_011342937.1">
    <property type="nucleotide sequence ID" value="NC_007498.2"/>
</dbReference>
<dbReference type="SMR" id="Q39ZS6"/>
<dbReference type="STRING" id="338963.Pcar_3146"/>
<dbReference type="KEGG" id="pca:Pcar_3146"/>
<dbReference type="eggNOG" id="COG0230">
    <property type="taxonomic scope" value="Bacteria"/>
</dbReference>
<dbReference type="HOGENOM" id="CLU_129938_2_0_7"/>
<dbReference type="OrthoDB" id="9804164at2"/>
<dbReference type="Proteomes" id="UP000002534">
    <property type="component" value="Chromosome"/>
</dbReference>
<dbReference type="GO" id="GO:1990904">
    <property type="term" value="C:ribonucleoprotein complex"/>
    <property type="evidence" value="ECO:0007669"/>
    <property type="project" value="UniProtKB-KW"/>
</dbReference>
<dbReference type="GO" id="GO:0005840">
    <property type="term" value="C:ribosome"/>
    <property type="evidence" value="ECO:0007669"/>
    <property type="project" value="UniProtKB-KW"/>
</dbReference>
<dbReference type="GO" id="GO:0003735">
    <property type="term" value="F:structural constituent of ribosome"/>
    <property type="evidence" value="ECO:0007669"/>
    <property type="project" value="InterPro"/>
</dbReference>
<dbReference type="GO" id="GO:0006412">
    <property type="term" value="P:translation"/>
    <property type="evidence" value="ECO:0007669"/>
    <property type="project" value="UniProtKB-UniRule"/>
</dbReference>
<dbReference type="FunFam" id="1.10.287.3980:FF:000001">
    <property type="entry name" value="Mitochondrial ribosomal protein L34"/>
    <property type="match status" value="1"/>
</dbReference>
<dbReference type="Gene3D" id="1.10.287.3980">
    <property type="match status" value="1"/>
</dbReference>
<dbReference type="HAMAP" id="MF_00391">
    <property type="entry name" value="Ribosomal_bL34"/>
    <property type="match status" value="1"/>
</dbReference>
<dbReference type="InterPro" id="IPR000271">
    <property type="entry name" value="Ribosomal_bL34"/>
</dbReference>
<dbReference type="InterPro" id="IPR020939">
    <property type="entry name" value="Ribosomal_bL34_CS"/>
</dbReference>
<dbReference type="NCBIfam" id="TIGR01030">
    <property type="entry name" value="rpmH_bact"/>
    <property type="match status" value="1"/>
</dbReference>
<dbReference type="PANTHER" id="PTHR14503:SF4">
    <property type="entry name" value="LARGE RIBOSOMAL SUBUNIT PROTEIN BL34M"/>
    <property type="match status" value="1"/>
</dbReference>
<dbReference type="PANTHER" id="PTHR14503">
    <property type="entry name" value="MITOCHONDRIAL RIBOSOMAL PROTEIN 34 FAMILY MEMBER"/>
    <property type="match status" value="1"/>
</dbReference>
<dbReference type="Pfam" id="PF00468">
    <property type="entry name" value="Ribosomal_L34"/>
    <property type="match status" value="1"/>
</dbReference>
<dbReference type="PROSITE" id="PS00784">
    <property type="entry name" value="RIBOSOMAL_L34"/>
    <property type="match status" value="1"/>
</dbReference>
<keyword id="KW-1185">Reference proteome</keyword>
<keyword id="KW-0687">Ribonucleoprotein</keyword>
<keyword id="KW-0689">Ribosomal protein</keyword>
<sequence>MSKRTYQPSRIRRKRTHGFRSRMQTKNGQAVIRRRRARGRKRLVVTIPVK</sequence>
<comment type="similarity">
    <text evidence="1">Belongs to the bacterial ribosomal protein bL34 family.</text>
</comment>
<name>RL34_SYNC1</name>
<protein>
    <recommendedName>
        <fullName evidence="1">Large ribosomal subunit protein bL34</fullName>
    </recommendedName>
    <alternativeName>
        <fullName evidence="3">50S ribosomal protein L34</fullName>
    </alternativeName>
</protein>
<reference key="1">
    <citation type="submission" date="2005-10" db="EMBL/GenBank/DDBJ databases">
        <title>Complete sequence of Pelobacter carbinolicus DSM 2380.</title>
        <authorList>
            <person name="Copeland A."/>
            <person name="Lucas S."/>
            <person name="Lapidus A."/>
            <person name="Barry K."/>
            <person name="Detter J.C."/>
            <person name="Glavina T."/>
            <person name="Hammon N."/>
            <person name="Israni S."/>
            <person name="Pitluck S."/>
            <person name="Chertkov O."/>
            <person name="Schmutz J."/>
            <person name="Larimer F."/>
            <person name="Land M."/>
            <person name="Kyrpides N."/>
            <person name="Ivanova N."/>
            <person name="Richardson P."/>
        </authorList>
    </citation>
    <scope>NUCLEOTIDE SEQUENCE [LARGE SCALE GENOMIC DNA]</scope>
    <source>
        <strain>DSM 2380 / NBRC 103641 / GraBd1</strain>
    </source>
</reference>